<proteinExistence type="inferred from homology"/>
<reference key="1">
    <citation type="journal article" date="2002" name="DNA Res.">
        <title>Complete genome structure of the thermophilic cyanobacterium Thermosynechococcus elongatus BP-1.</title>
        <authorList>
            <person name="Nakamura Y."/>
            <person name="Kaneko T."/>
            <person name="Sato S."/>
            <person name="Ikeuchi M."/>
            <person name="Katoh H."/>
            <person name="Sasamoto S."/>
            <person name="Watanabe A."/>
            <person name="Iriguchi M."/>
            <person name="Kawashima K."/>
            <person name="Kimura T."/>
            <person name="Kishida Y."/>
            <person name="Kiyokawa C."/>
            <person name="Kohara M."/>
            <person name="Matsumoto M."/>
            <person name="Matsuno A."/>
            <person name="Nakazaki N."/>
            <person name="Shimpo S."/>
            <person name="Sugimoto M."/>
            <person name="Takeuchi C."/>
            <person name="Yamada M."/>
            <person name="Tabata S."/>
        </authorList>
    </citation>
    <scope>NUCLEOTIDE SEQUENCE [LARGE SCALE GENOMIC DNA]</scope>
    <source>
        <strain>NIES-2133 / IAM M-273 / BP-1</strain>
    </source>
</reference>
<keyword id="KW-0067">ATP-binding</keyword>
<keyword id="KW-0418">Kinase</keyword>
<keyword id="KW-0460">Magnesium</keyword>
<keyword id="KW-0479">Metal-binding</keyword>
<keyword id="KW-0547">Nucleotide-binding</keyword>
<keyword id="KW-0597">Phosphoprotein</keyword>
<keyword id="KW-1185">Reference proteome</keyword>
<keyword id="KW-0677">Repeat</keyword>
<keyword id="KW-0808">Transferase</keyword>
<name>PPK1_THEVB</name>
<accession>Q8DMA8</accession>
<sequence>MPSAKSPRRKAPEPIDLDNPQYYFNRSLSWLEFNKRVLHEAYDPRTPLLERLKFMAIFSSNLDEFFMVRVAGLKQQVESGILQVGADGMPPAEQLQAVRQYLLPIVTEQHRYFDQELRALLAKESIFLTRFNELTPEQQAYLNDYFQAQVFPVLTPLAVDPAHPFPYISSLSLNLAVLIRDPESGQERLARVKVPNQFPRFVALPQHLHSPQGVHWLGVPLEEIIAHNLSALFPGMEIEAYFAFRITRSADLELETDKADDLLIAIEQEIRKRRFGSVVRLEVQRGIPPLLRQTLMEEMDLEEIDVYELEGLLCLNDLFAFMGLPLPQFKDPEWQPQVPPSFQRVEERESMFDTSSEITTLGTDYWEAVANELFSLIREGDIIVHHPYHSFAATVQRFITLAAHDPQVLAIKITLYRTSGDSPIVSALIKAAENGKQVAVLVELKARFDEENNILWARKLEKVGVHVVYGVPGLKTHTKTVLVVRQEAGQIRRYVHIGTGNYNPKTASLYEDLGLFSCREELGADLSELFNVLTGYARQRDYRKLLVAPVTMRDRTLQLIYREIEHARNGQPARIIAKMNAITDTQVIRALYEASQAGVDIDLIIRGMCCLRPGVPGVSDRIRVISIIGRFLEHSRIFYFGNNGDPEYYIGSADWRSRNLDRRVEAITPIEDPAIQLELKERLEIMLADNRQAWELQPDGTYRQRQPAPGEAERGTHSVLMARTLKDVQGSH</sequence>
<gene>
    <name evidence="1" type="primary">ppk</name>
    <name type="ordered locus">tlr0213</name>
</gene>
<comment type="function">
    <text evidence="1">Catalyzes the reversible transfer of the terminal phosphate of ATP to form a long-chain polyphosphate (polyP).</text>
</comment>
<comment type="catalytic activity">
    <reaction evidence="1">
        <text>[phosphate](n) + ATP = [phosphate](n+1) + ADP</text>
        <dbReference type="Rhea" id="RHEA:19573"/>
        <dbReference type="Rhea" id="RHEA-COMP:9859"/>
        <dbReference type="Rhea" id="RHEA-COMP:14280"/>
        <dbReference type="ChEBI" id="CHEBI:16838"/>
        <dbReference type="ChEBI" id="CHEBI:30616"/>
        <dbReference type="ChEBI" id="CHEBI:456216"/>
        <dbReference type="EC" id="2.7.4.1"/>
    </reaction>
</comment>
<comment type="cofactor">
    <cofactor evidence="1">
        <name>Mg(2+)</name>
        <dbReference type="ChEBI" id="CHEBI:18420"/>
    </cofactor>
</comment>
<comment type="PTM">
    <text evidence="1">An intermediate of this reaction is the autophosphorylated ppk in which a phosphate is covalently linked to a histidine residue through a N-P bond.</text>
</comment>
<comment type="similarity">
    <text evidence="1">Belongs to the polyphosphate kinase 1 (PPK1) family.</text>
</comment>
<comment type="sequence caution" evidence="3">
    <conflict type="erroneous initiation">
        <sequence resource="EMBL-CDS" id="BAC07766"/>
    </conflict>
</comment>
<protein>
    <recommendedName>
        <fullName evidence="1">Polyphosphate kinase</fullName>
        <ecNumber evidence="1">2.7.4.1</ecNumber>
    </recommendedName>
    <alternativeName>
        <fullName evidence="1">ATP-polyphosphate phosphotransferase</fullName>
    </alternativeName>
    <alternativeName>
        <fullName evidence="1">Polyphosphoric acid kinase</fullName>
    </alternativeName>
</protein>
<evidence type="ECO:0000255" key="1">
    <source>
        <dbReference type="HAMAP-Rule" id="MF_00347"/>
    </source>
</evidence>
<evidence type="ECO:0000256" key="2">
    <source>
        <dbReference type="SAM" id="MobiDB-lite"/>
    </source>
</evidence>
<evidence type="ECO:0000305" key="3"/>
<feature type="chain" id="PRO_0000128663" description="Polyphosphate kinase">
    <location>
        <begin position="1"/>
        <end position="732"/>
    </location>
</feature>
<feature type="region of interest" description="Disordered" evidence="2">
    <location>
        <begin position="699"/>
        <end position="718"/>
    </location>
</feature>
<feature type="active site" description="Phosphohistidine intermediate" evidence="1">
    <location>
        <position position="477"/>
    </location>
</feature>
<feature type="binding site" evidence="1">
    <location>
        <position position="61"/>
    </location>
    <ligand>
        <name>ATP</name>
        <dbReference type="ChEBI" id="CHEBI:30616"/>
    </ligand>
</feature>
<feature type="binding site" evidence="1">
    <location>
        <position position="417"/>
    </location>
    <ligand>
        <name>Mg(2+)</name>
        <dbReference type="ChEBI" id="CHEBI:18420"/>
    </ligand>
</feature>
<feature type="binding site" evidence="1">
    <location>
        <position position="447"/>
    </location>
    <ligand>
        <name>Mg(2+)</name>
        <dbReference type="ChEBI" id="CHEBI:18420"/>
    </ligand>
</feature>
<feature type="binding site" evidence="1">
    <location>
        <position position="510"/>
    </location>
    <ligand>
        <name>ATP</name>
        <dbReference type="ChEBI" id="CHEBI:30616"/>
    </ligand>
</feature>
<feature type="binding site" evidence="1">
    <location>
        <position position="606"/>
    </location>
    <ligand>
        <name>ATP</name>
        <dbReference type="ChEBI" id="CHEBI:30616"/>
    </ligand>
</feature>
<feature type="binding site" evidence="1">
    <location>
        <position position="634"/>
    </location>
    <ligand>
        <name>ATP</name>
        <dbReference type="ChEBI" id="CHEBI:30616"/>
    </ligand>
</feature>
<dbReference type="EC" id="2.7.4.1" evidence="1"/>
<dbReference type="EMBL" id="BA000039">
    <property type="protein sequence ID" value="BAC07766.1"/>
    <property type="status" value="ALT_INIT"/>
    <property type="molecule type" value="Genomic_DNA"/>
</dbReference>
<dbReference type="RefSeq" id="NP_681004.1">
    <property type="nucleotide sequence ID" value="NC_004113.1"/>
</dbReference>
<dbReference type="RefSeq" id="WP_164921077.1">
    <property type="nucleotide sequence ID" value="NC_004113.1"/>
</dbReference>
<dbReference type="SMR" id="Q8DMA8"/>
<dbReference type="STRING" id="197221.gene:10746794"/>
<dbReference type="EnsemblBacteria" id="BAC07766">
    <property type="protein sequence ID" value="BAC07766"/>
    <property type="gene ID" value="BAC07766"/>
</dbReference>
<dbReference type="KEGG" id="tel:tlr0213"/>
<dbReference type="PATRIC" id="fig|197221.4.peg.219"/>
<dbReference type="eggNOG" id="COG0855">
    <property type="taxonomic scope" value="Bacteria"/>
</dbReference>
<dbReference type="BRENDA" id="2.7.4.1">
    <property type="organism ID" value="7763"/>
</dbReference>
<dbReference type="Proteomes" id="UP000000440">
    <property type="component" value="Chromosome"/>
</dbReference>
<dbReference type="GO" id="GO:0009358">
    <property type="term" value="C:polyphosphate kinase complex"/>
    <property type="evidence" value="ECO:0007669"/>
    <property type="project" value="InterPro"/>
</dbReference>
<dbReference type="GO" id="GO:0005524">
    <property type="term" value="F:ATP binding"/>
    <property type="evidence" value="ECO:0007669"/>
    <property type="project" value="UniProtKB-KW"/>
</dbReference>
<dbReference type="GO" id="GO:0046872">
    <property type="term" value="F:metal ion binding"/>
    <property type="evidence" value="ECO:0007669"/>
    <property type="project" value="UniProtKB-KW"/>
</dbReference>
<dbReference type="GO" id="GO:0008976">
    <property type="term" value="F:polyphosphate kinase activity"/>
    <property type="evidence" value="ECO:0007669"/>
    <property type="project" value="UniProtKB-UniRule"/>
</dbReference>
<dbReference type="GO" id="GO:0006799">
    <property type="term" value="P:polyphosphate biosynthetic process"/>
    <property type="evidence" value="ECO:0007669"/>
    <property type="project" value="UniProtKB-UniRule"/>
</dbReference>
<dbReference type="CDD" id="cd09165">
    <property type="entry name" value="PLDc_PaPPK1_C1_like"/>
    <property type="match status" value="1"/>
</dbReference>
<dbReference type="CDD" id="cd09168">
    <property type="entry name" value="PLDc_PaPPK1_C2_like"/>
    <property type="match status" value="1"/>
</dbReference>
<dbReference type="FunFam" id="3.30.870.10:FF:000001">
    <property type="entry name" value="Polyphosphate kinase"/>
    <property type="match status" value="1"/>
</dbReference>
<dbReference type="Gene3D" id="3.30.870.10">
    <property type="entry name" value="Endonuclease Chain A"/>
    <property type="match status" value="2"/>
</dbReference>
<dbReference type="Gene3D" id="3.30.1840.10">
    <property type="entry name" value="Polyphosphate kinase middle domain"/>
    <property type="match status" value="1"/>
</dbReference>
<dbReference type="Gene3D" id="1.20.58.310">
    <property type="entry name" value="Polyphosphate kinase N-terminal domain"/>
    <property type="match status" value="1"/>
</dbReference>
<dbReference type="HAMAP" id="MF_00347">
    <property type="entry name" value="Polyphosphate_kinase"/>
    <property type="match status" value="1"/>
</dbReference>
<dbReference type="InterPro" id="IPR003414">
    <property type="entry name" value="PP_kinase"/>
</dbReference>
<dbReference type="InterPro" id="IPR041108">
    <property type="entry name" value="PP_kinase_C_1"/>
</dbReference>
<dbReference type="InterPro" id="IPR024953">
    <property type="entry name" value="PP_kinase_middle"/>
</dbReference>
<dbReference type="InterPro" id="IPR036830">
    <property type="entry name" value="PP_kinase_middle_dom_sf"/>
</dbReference>
<dbReference type="InterPro" id="IPR025200">
    <property type="entry name" value="PPK_C_dom2"/>
</dbReference>
<dbReference type="InterPro" id="IPR025198">
    <property type="entry name" value="PPK_N_dom"/>
</dbReference>
<dbReference type="InterPro" id="IPR036832">
    <property type="entry name" value="PPK_N_dom_sf"/>
</dbReference>
<dbReference type="NCBIfam" id="TIGR03705">
    <property type="entry name" value="poly_P_kin"/>
    <property type="match status" value="1"/>
</dbReference>
<dbReference type="NCBIfam" id="NF003918">
    <property type="entry name" value="PRK05443.1-2"/>
    <property type="match status" value="1"/>
</dbReference>
<dbReference type="NCBIfam" id="NF003921">
    <property type="entry name" value="PRK05443.2-2"/>
    <property type="match status" value="1"/>
</dbReference>
<dbReference type="PANTHER" id="PTHR30218">
    <property type="entry name" value="POLYPHOSPHATE KINASE"/>
    <property type="match status" value="1"/>
</dbReference>
<dbReference type="PANTHER" id="PTHR30218:SF0">
    <property type="entry name" value="POLYPHOSPHATE KINASE"/>
    <property type="match status" value="1"/>
</dbReference>
<dbReference type="Pfam" id="PF02503">
    <property type="entry name" value="PP_kinase"/>
    <property type="match status" value="1"/>
</dbReference>
<dbReference type="Pfam" id="PF13090">
    <property type="entry name" value="PP_kinase_C"/>
    <property type="match status" value="1"/>
</dbReference>
<dbReference type="Pfam" id="PF17941">
    <property type="entry name" value="PP_kinase_C_1"/>
    <property type="match status" value="1"/>
</dbReference>
<dbReference type="Pfam" id="PF13089">
    <property type="entry name" value="PP_kinase_N"/>
    <property type="match status" value="1"/>
</dbReference>
<dbReference type="PIRSF" id="PIRSF015589">
    <property type="entry name" value="PP_kinase"/>
    <property type="match status" value="1"/>
</dbReference>
<dbReference type="SUPFAM" id="SSF56024">
    <property type="entry name" value="Phospholipase D/nuclease"/>
    <property type="match status" value="2"/>
</dbReference>
<dbReference type="SUPFAM" id="SSF143724">
    <property type="entry name" value="PHP14-like"/>
    <property type="match status" value="1"/>
</dbReference>
<dbReference type="SUPFAM" id="SSF140356">
    <property type="entry name" value="PPK N-terminal domain-like"/>
    <property type="match status" value="1"/>
</dbReference>
<organism>
    <name type="scientific">Thermosynechococcus vestitus (strain NIES-2133 / IAM M-273 / BP-1)</name>
    <dbReference type="NCBI Taxonomy" id="197221"/>
    <lineage>
        <taxon>Bacteria</taxon>
        <taxon>Bacillati</taxon>
        <taxon>Cyanobacteriota</taxon>
        <taxon>Cyanophyceae</taxon>
        <taxon>Acaryochloridales</taxon>
        <taxon>Thermosynechococcaceae</taxon>
        <taxon>Thermosynechococcus</taxon>
    </lineage>
</organism>